<reference key="1">
    <citation type="journal article" date="2009" name="J. Bacteriol.">
        <title>Genome sequences of three Agrobacterium biovars help elucidate the evolution of multichromosome genomes in bacteria.</title>
        <authorList>
            <person name="Slater S.C."/>
            <person name="Goldman B.S."/>
            <person name="Goodner B."/>
            <person name="Setubal J.C."/>
            <person name="Farrand S.K."/>
            <person name="Nester E.W."/>
            <person name="Burr T.J."/>
            <person name="Banta L."/>
            <person name="Dickerman A.W."/>
            <person name="Paulsen I."/>
            <person name="Otten L."/>
            <person name="Suen G."/>
            <person name="Welch R."/>
            <person name="Almeida N.F."/>
            <person name="Arnold F."/>
            <person name="Burton O.T."/>
            <person name="Du Z."/>
            <person name="Ewing A."/>
            <person name="Godsy E."/>
            <person name="Heisel S."/>
            <person name="Houmiel K.L."/>
            <person name="Jhaveri J."/>
            <person name="Lu J."/>
            <person name="Miller N.M."/>
            <person name="Norton S."/>
            <person name="Chen Q."/>
            <person name="Phoolcharoen W."/>
            <person name="Ohlin V."/>
            <person name="Ondrusek D."/>
            <person name="Pride N."/>
            <person name="Stricklin S.L."/>
            <person name="Sun J."/>
            <person name="Wheeler C."/>
            <person name="Wilson L."/>
            <person name="Zhu H."/>
            <person name="Wood D.W."/>
        </authorList>
    </citation>
    <scope>NUCLEOTIDE SEQUENCE [LARGE SCALE GENOMIC DNA]</scope>
    <source>
        <strain>ATCC BAA-846 / DSM 112012 / S4</strain>
    </source>
</reference>
<name>GLND_ALLAM</name>
<organism>
    <name type="scientific">Allorhizobium ampelinum (strain ATCC BAA-846 / DSM 112012 / S4)</name>
    <name type="common">Agrobacterium vitis (strain S4)</name>
    <dbReference type="NCBI Taxonomy" id="311402"/>
    <lineage>
        <taxon>Bacteria</taxon>
        <taxon>Pseudomonadati</taxon>
        <taxon>Pseudomonadota</taxon>
        <taxon>Alphaproteobacteria</taxon>
        <taxon>Hyphomicrobiales</taxon>
        <taxon>Rhizobiaceae</taxon>
        <taxon>Rhizobium/Agrobacterium group</taxon>
        <taxon>Allorhizobium</taxon>
        <taxon>Allorhizobium ampelinum</taxon>
    </lineage>
</organism>
<keyword id="KW-0378">Hydrolase</keyword>
<keyword id="KW-0460">Magnesium</keyword>
<keyword id="KW-0511">Multifunctional enzyme</keyword>
<keyword id="KW-0548">Nucleotidyltransferase</keyword>
<keyword id="KW-1185">Reference proteome</keyword>
<keyword id="KW-0677">Repeat</keyword>
<keyword id="KW-0808">Transferase</keyword>
<sequence length="941" mass="105604">MAKHDLSDATLPDFKALEAECMSIVLQNGKVPETRAAILPLLKKASIDGREAALRHLTTNGSGLECAGMISNLQDNLITLVHRMVTQAVYPTTQQEFAVAAVGGYGRSTLAPGSDIDLLFLLSVKAGADARKAVEFLLYILWDLGFKVGHATRLVEECIRLSRTDMTIRTAILETRFICGEALLVGELQKRFDAEVVEKTAPEFIAAKLAERDERHRKAGDTRYLVEPNVKEGKGGLRDLHTLFWIAKYYYRISDPADLVKLGVLSRQEWRMFQKSDDFLWAVRCHMHFATGKPEERLSFDLQPEIARNLGYNARPGLSEVERFMKHYFHVAKNVGDLTRIVCASLEDKQAKAAPGLTAAIGRFAHRPRRIPGTPEFIEDRGRIALSGPDIFKRDPINIMRFFHVADLHGLEFHPDALKAITRCLPLIDHDFRENEEANRLFLSILTSKRDPALMLTRMNEAGVLGKFIPDFGRIVSMMQFNMYHHYTVDEHLIRSVGILAEVDQGQHADIHPLAVKLMPNIEERTVLFVAVLLHDIAKGRQEDHSIAGAKVARRLCPRLGLNDKQTELVVWLIDQHLLMSMVAQTRDLHDRKTITDFAEKVQSLDRLRMLLVLTVCDIRAVGPGVWNGWKGQLLRTLYYETELLLSGGFSESPRKERAKQAAEQLAEALSDWSQKDQKTYTKLHYQPYLLTVPLEDQVRHAHFIRQADKADQALATMVRTHSFHAITEITVLAPDHPRLLSIIAGACAAAGANIADAQIFTTSDGRALDTILINREFPIDEDEMRRANTISKMIEDVLAGKKRLPEVIATRTKGRKRNKTFTVKPHVTISNSLSNKFTVIEIECLDRIGLLAEVTAVLADLSLDIHSARITTFGEKVIDTFYVIDLVGQKITNENRQGSISVRLKAVMSEQPDELREQMPSGIIAPAATKSPAAEKKARV</sequence>
<comment type="function">
    <text evidence="1">Modifies, by uridylylation and deuridylylation, the PII regulatory proteins (GlnB and homologs), in response to the nitrogen status of the cell that GlnD senses through the glutamine level. Under low glutamine levels, catalyzes the conversion of the PII proteins and UTP to PII-UMP and PPi, while under higher glutamine levels, GlnD hydrolyzes PII-UMP to PII and UMP (deuridylylation). Thus, controls uridylylation state and activity of the PII proteins, and plays an important role in the regulation of nitrogen assimilation and metabolism.</text>
</comment>
<comment type="catalytic activity">
    <reaction evidence="1">
        <text>[protein-PII]-L-tyrosine + UTP = [protein-PII]-uridylyl-L-tyrosine + diphosphate</text>
        <dbReference type="Rhea" id="RHEA:13673"/>
        <dbReference type="Rhea" id="RHEA-COMP:12147"/>
        <dbReference type="Rhea" id="RHEA-COMP:12148"/>
        <dbReference type="ChEBI" id="CHEBI:33019"/>
        <dbReference type="ChEBI" id="CHEBI:46398"/>
        <dbReference type="ChEBI" id="CHEBI:46858"/>
        <dbReference type="ChEBI" id="CHEBI:90602"/>
        <dbReference type="EC" id="2.7.7.59"/>
    </reaction>
</comment>
<comment type="catalytic activity">
    <reaction evidence="1">
        <text>[protein-PII]-uridylyl-L-tyrosine + H2O = [protein-PII]-L-tyrosine + UMP + H(+)</text>
        <dbReference type="Rhea" id="RHEA:48600"/>
        <dbReference type="Rhea" id="RHEA-COMP:12147"/>
        <dbReference type="Rhea" id="RHEA-COMP:12148"/>
        <dbReference type="ChEBI" id="CHEBI:15377"/>
        <dbReference type="ChEBI" id="CHEBI:15378"/>
        <dbReference type="ChEBI" id="CHEBI:46858"/>
        <dbReference type="ChEBI" id="CHEBI:57865"/>
        <dbReference type="ChEBI" id="CHEBI:90602"/>
    </reaction>
</comment>
<comment type="cofactor">
    <cofactor evidence="1">
        <name>Mg(2+)</name>
        <dbReference type="ChEBI" id="CHEBI:18420"/>
    </cofactor>
</comment>
<comment type="activity regulation">
    <text evidence="1">Uridylyltransferase (UTase) activity is inhibited by glutamine, while glutamine activates uridylyl-removing (UR) activity.</text>
</comment>
<comment type="domain">
    <text evidence="1">Has four distinct domains: an N-terminal nucleotidyltransferase (NT) domain responsible for UTase activity, a central HD domain that encodes UR activity, and two C-terminal ACT domains that seem to have a role in glutamine sensing.</text>
</comment>
<comment type="similarity">
    <text evidence="1">Belongs to the GlnD family.</text>
</comment>
<proteinExistence type="inferred from homology"/>
<accession>B9JZI2</accession>
<evidence type="ECO:0000255" key="1">
    <source>
        <dbReference type="HAMAP-Rule" id="MF_00277"/>
    </source>
</evidence>
<evidence type="ECO:0000255" key="2">
    <source>
        <dbReference type="PROSITE-ProRule" id="PRU01175"/>
    </source>
</evidence>
<evidence type="ECO:0000256" key="3">
    <source>
        <dbReference type="SAM" id="MobiDB-lite"/>
    </source>
</evidence>
<dbReference type="EC" id="2.7.7.59" evidence="1"/>
<dbReference type="EC" id="3.1.4.-" evidence="1"/>
<dbReference type="EMBL" id="CP000633">
    <property type="protein sequence ID" value="ACM35294.1"/>
    <property type="molecule type" value="Genomic_DNA"/>
</dbReference>
<dbReference type="RefSeq" id="WP_012654824.1">
    <property type="nucleotide sequence ID" value="NC_011989.1"/>
</dbReference>
<dbReference type="SMR" id="B9JZI2"/>
<dbReference type="STRING" id="311402.Avi_0424"/>
<dbReference type="KEGG" id="avi:Avi_0424"/>
<dbReference type="eggNOG" id="COG2844">
    <property type="taxonomic scope" value="Bacteria"/>
</dbReference>
<dbReference type="HOGENOM" id="CLU_012833_1_0_5"/>
<dbReference type="Proteomes" id="UP000001596">
    <property type="component" value="Chromosome 1"/>
</dbReference>
<dbReference type="GO" id="GO:0008773">
    <property type="term" value="F:[protein-PII] uridylyltransferase activity"/>
    <property type="evidence" value="ECO:0007669"/>
    <property type="project" value="UniProtKB-UniRule"/>
</dbReference>
<dbReference type="GO" id="GO:0008081">
    <property type="term" value="F:phosphoric diester hydrolase activity"/>
    <property type="evidence" value="ECO:0007669"/>
    <property type="project" value="UniProtKB-UniRule"/>
</dbReference>
<dbReference type="GO" id="GO:0006808">
    <property type="term" value="P:regulation of nitrogen utilization"/>
    <property type="evidence" value="ECO:0007669"/>
    <property type="project" value="UniProtKB-UniRule"/>
</dbReference>
<dbReference type="CDD" id="cd04899">
    <property type="entry name" value="ACT_ACR-UUR-like_2"/>
    <property type="match status" value="1"/>
</dbReference>
<dbReference type="CDD" id="cd00077">
    <property type="entry name" value="HDc"/>
    <property type="match status" value="1"/>
</dbReference>
<dbReference type="CDD" id="cd05401">
    <property type="entry name" value="NT_GlnE_GlnD_like"/>
    <property type="match status" value="1"/>
</dbReference>
<dbReference type="Gene3D" id="3.30.70.260">
    <property type="match status" value="1"/>
</dbReference>
<dbReference type="Gene3D" id="3.30.460.10">
    <property type="entry name" value="Beta Polymerase, domain 2"/>
    <property type="match status" value="1"/>
</dbReference>
<dbReference type="Gene3D" id="1.10.3090.10">
    <property type="entry name" value="cca-adding enzyme, domain 2"/>
    <property type="match status" value="1"/>
</dbReference>
<dbReference type="HAMAP" id="MF_00277">
    <property type="entry name" value="PII_uridylyl_transf"/>
    <property type="match status" value="1"/>
</dbReference>
<dbReference type="InterPro" id="IPR045865">
    <property type="entry name" value="ACT-like_dom_sf"/>
</dbReference>
<dbReference type="InterPro" id="IPR002912">
    <property type="entry name" value="ACT_dom"/>
</dbReference>
<dbReference type="InterPro" id="IPR003607">
    <property type="entry name" value="HD/PDEase_dom"/>
</dbReference>
<dbReference type="InterPro" id="IPR006674">
    <property type="entry name" value="HD_domain"/>
</dbReference>
<dbReference type="InterPro" id="IPR043519">
    <property type="entry name" value="NT_sf"/>
</dbReference>
<dbReference type="InterPro" id="IPR013546">
    <property type="entry name" value="PII_UdlTrfase/GS_AdlTrfase"/>
</dbReference>
<dbReference type="InterPro" id="IPR002934">
    <property type="entry name" value="Polymerase_NTP_transf_dom"/>
</dbReference>
<dbReference type="InterPro" id="IPR010043">
    <property type="entry name" value="UTase/UR"/>
</dbReference>
<dbReference type="NCBIfam" id="NF003467">
    <property type="entry name" value="PRK05092.1"/>
    <property type="match status" value="1"/>
</dbReference>
<dbReference type="NCBIfam" id="TIGR01693">
    <property type="entry name" value="UTase_glnD"/>
    <property type="match status" value="1"/>
</dbReference>
<dbReference type="PANTHER" id="PTHR47320">
    <property type="entry name" value="BIFUNCTIONAL URIDYLYLTRANSFERASE/URIDYLYL-REMOVING ENZYME"/>
    <property type="match status" value="1"/>
</dbReference>
<dbReference type="PANTHER" id="PTHR47320:SF1">
    <property type="entry name" value="BIFUNCTIONAL URIDYLYLTRANSFERASE_URIDYLYL-REMOVING ENZYME"/>
    <property type="match status" value="1"/>
</dbReference>
<dbReference type="Pfam" id="PF24931">
    <property type="entry name" value="ACT_ACR9_3rd"/>
    <property type="match status" value="1"/>
</dbReference>
<dbReference type="Pfam" id="PF08335">
    <property type="entry name" value="GlnD_UR_UTase"/>
    <property type="match status" value="1"/>
</dbReference>
<dbReference type="Pfam" id="PF01966">
    <property type="entry name" value="HD"/>
    <property type="match status" value="1"/>
</dbReference>
<dbReference type="Pfam" id="PF01909">
    <property type="entry name" value="NTP_transf_2"/>
    <property type="match status" value="1"/>
</dbReference>
<dbReference type="PIRSF" id="PIRSF006288">
    <property type="entry name" value="PII_uridyltransf"/>
    <property type="match status" value="1"/>
</dbReference>
<dbReference type="SMART" id="SM00471">
    <property type="entry name" value="HDc"/>
    <property type="match status" value="1"/>
</dbReference>
<dbReference type="SUPFAM" id="SSF55021">
    <property type="entry name" value="ACT-like"/>
    <property type="match status" value="2"/>
</dbReference>
<dbReference type="SUPFAM" id="SSF81301">
    <property type="entry name" value="Nucleotidyltransferase"/>
    <property type="match status" value="1"/>
</dbReference>
<dbReference type="SUPFAM" id="SSF81593">
    <property type="entry name" value="Nucleotidyltransferase substrate binding subunit/domain"/>
    <property type="match status" value="1"/>
</dbReference>
<dbReference type="SUPFAM" id="SSF81891">
    <property type="entry name" value="Poly A polymerase C-terminal region-like"/>
    <property type="match status" value="1"/>
</dbReference>
<dbReference type="PROSITE" id="PS51671">
    <property type="entry name" value="ACT"/>
    <property type="match status" value="2"/>
</dbReference>
<dbReference type="PROSITE" id="PS51831">
    <property type="entry name" value="HD"/>
    <property type="match status" value="1"/>
</dbReference>
<gene>
    <name evidence="1" type="primary">glnD</name>
    <name type="ordered locus">Avi_0424</name>
</gene>
<protein>
    <recommendedName>
        <fullName evidence="1">Bifunctional uridylyltransferase/uridylyl-removing enzyme</fullName>
        <shortName evidence="1">UTase/UR</shortName>
    </recommendedName>
    <alternativeName>
        <fullName evidence="1">Bifunctional [protein-PII] modification enzyme</fullName>
    </alternativeName>
    <alternativeName>
        <fullName evidence="1">Bifunctional nitrogen sensor protein</fullName>
    </alternativeName>
    <domain>
        <recommendedName>
            <fullName evidence="1">[Protein-PII] uridylyltransferase</fullName>
            <shortName evidence="1">PII uridylyltransferase</shortName>
            <shortName evidence="1">UTase</shortName>
            <ecNumber evidence="1">2.7.7.59</ecNumber>
        </recommendedName>
    </domain>
    <domain>
        <recommendedName>
            <fullName evidence="1">[Protein-PII]-UMP uridylyl-removing enzyme</fullName>
            <shortName evidence="1">UR</shortName>
            <ecNumber evidence="1">3.1.4.-</ecNumber>
        </recommendedName>
    </domain>
</protein>
<feature type="chain" id="PRO_1000132525" description="Bifunctional uridylyltransferase/uridylyl-removing enzyme">
    <location>
        <begin position="1"/>
        <end position="941"/>
    </location>
</feature>
<feature type="domain" description="HD" evidence="2">
    <location>
        <begin position="489"/>
        <end position="611"/>
    </location>
</feature>
<feature type="domain" description="ACT 1" evidence="1">
    <location>
        <begin position="729"/>
        <end position="810"/>
    </location>
</feature>
<feature type="domain" description="ACT 2" evidence="1">
    <location>
        <begin position="840"/>
        <end position="919"/>
    </location>
</feature>
<feature type="region of interest" description="Uridylyltransferase">
    <location>
        <begin position="1"/>
        <end position="372"/>
    </location>
</feature>
<feature type="region of interest" description="Uridylyl-removing">
    <location>
        <begin position="373"/>
        <end position="728"/>
    </location>
</feature>
<feature type="region of interest" description="Disordered" evidence="3">
    <location>
        <begin position="916"/>
        <end position="941"/>
    </location>
</feature>